<protein>
    <recommendedName>
        <fullName evidence="3">Candoxin</fullName>
    </recommendedName>
</protein>
<proteinExistence type="evidence at protein level"/>
<reference key="1">
    <citation type="submission" date="2002-08" db="EMBL/GenBank/DDBJ databases">
        <title>Comparative genomics and characterization of novel neurotoxins in the venom of Bungarus candidus (Malayan banded krait).</title>
        <authorList>
            <person name="Tsai I.H."/>
            <person name="Hsu H.Y."/>
            <person name="Wang Y.M."/>
        </authorList>
    </citation>
    <scope>NUCLEOTIDE SEQUENCE [MRNA]</scope>
    <source>
        <tissue>Venom gland</tissue>
    </source>
</reference>
<reference key="2">
    <citation type="journal article" date="2002" name="J. Biol. Chem.">
        <title>Candoxin, a novel toxin from Bungarus candidus, is a reversible antagonist of muscle (alphabetagammadelta) but a poorly reversible antagonist of neuronal alpha 7 nicotinic acetylcholine receptors.</title>
        <authorList>
            <person name="Nirthanan S."/>
            <person name="Charpantier E."/>
            <person name="Gopalakrishnakone P."/>
            <person name="Gwee M.C.E."/>
            <person name="Khoo H.-E."/>
            <person name="Cheah L.-S."/>
            <person name="Bertrand D."/>
            <person name="Kini R.M."/>
        </authorList>
    </citation>
    <scope>PROTEIN SEQUENCE OF 22-87</scope>
    <scope>FUNCTION</scope>
    <scope>MASS SPECTROMETRY</scope>
    <scope>SUBCELLULAR LOCATION</scope>
    <source>
        <tissue>Venom</tissue>
    </source>
</reference>
<reference key="3">
    <citation type="journal article" date="2003" name="Br. J. Pharmacol.">
        <title>Neuromuscular effects of candoxin, a novel toxin from the venom of the Malayan krait (Bungarus candidus).</title>
        <authorList>
            <person name="Nirthanan S."/>
            <person name="Charpantier E."/>
            <person name="Gopalakrishnakone P."/>
            <person name="Gwee M.C.E."/>
            <person name="Khoo H.E."/>
            <person name="Cheah L.S."/>
            <person name="Kini R.M."/>
            <person name="Bertrand D."/>
        </authorList>
    </citation>
    <scope>PHARMACOLOGICAL CHARACTERIZATION</scope>
</reference>
<reference key="4">
    <citation type="journal article" date="2003" name="Acta Crystallogr. D">
        <title>Crystallization and preliminary X-ray analysis of candoxin, a novel reversible neurotoxin from the Malayan krait Bungarus candidus.</title>
        <authorList>
            <person name="Paaventhan P."/>
            <person name="Joseph J.S."/>
            <person name="Nirthanan S."/>
            <person name="Rajaseger G."/>
            <person name="Gopalakrishnakone P."/>
            <person name="Kini M.R."/>
            <person name="Kolatkar P.R."/>
        </authorList>
    </citation>
    <scope>X-RAY CRYSTALLOGRAPHY (1.8 ANGSTROMS) OF 22-87</scope>
    <scope>DISULFIDE BONDS</scope>
</reference>
<feature type="signal peptide" evidence="1">
    <location>
        <begin position="1"/>
        <end position="21"/>
    </location>
</feature>
<feature type="chain" id="PRO_0000035417" description="Candoxin" evidence="1">
    <location>
        <begin position="22"/>
        <end position="87"/>
    </location>
</feature>
<feature type="disulfide bond" evidence="2 6">
    <location>
        <begin position="24"/>
        <end position="47"/>
    </location>
</feature>
<feature type="disulfide bond" evidence="2 6">
    <location>
        <begin position="27"/>
        <end position="32"/>
    </location>
</feature>
<feature type="disulfide bond" evidence="2 6">
    <location>
        <begin position="40"/>
        <end position="64"/>
    </location>
</feature>
<feature type="disulfide bond" evidence="2 6">
    <location>
        <begin position="68"/>
        <end position="80"/>
    </location>
</feature>
<feature type="disulfide bond" evidence="2 6">
    <location>
        <begin position="81"/>
        <end position="86"/>
    </location>
</feature>
<feature type="strand" evidence="7">
    <location>
        <begin position="23"/>
        <end position="26"/>
    </location>
</feature>
<feature type="strand" evidence="7">
    <location>
        <begin position="36"/>
        <end position="39"/>
    </location>
</feature>
<feature type="strand" evidence="7">
    <location>
        <begin position="42"/>
        <end position="44"/>
    </location>
</feature>
<feature type="strand" evidence="7">
    <location>
        <begin position="46"/>
        <end position="52"/>
    </location>
</feature>
<feature type="strand" evidence="7">
    <location>
        <begin position="59"/>
        <end position="61"/>
    </location>
</feature>
<feature type="strand" evidence="7">
    <location>
        <begin position="64"/>
        <end position="66"/>
    </location>
</feature>
<feature type="strand" evidence="7">
    <location>
        <begin position="72"/>
        <end position="74"/>
    </location>
</feature>
<feature type="strand" evidence="7">
    <location>
        <begin position="77"/>
        <end position="81"/>
    </location>
</feature>
<evidence type="ECO:0000269" key="1">
    <source>
    </source>
</evidence>
<evidence type="ECO:0000269" key="2">
    <source>
    </source>
</evidence>
<evidence type="ECO:0000303" key="3">
    <source>
    </source>
</evidence>
<evidence type="ECO:0000305" key="4"/>
<evidence type="ECO:0000305" key="5">
    <source>
    </source>
</evidence>
<evidence type="ECO:0000312" key="6">
    <source>
        <dbReference type="PDB" id="1JGK"/>
    </source>
</evidence>
<evidence type="ECO:0007829" key="7">
    <source>
        <dbReference type="PDB" id="1JGK"/>
    </source>
</evidence>
<comment type="function">
    <text evidence="1">Binds and inhibits muscular and neuronal nicotinic acetylcholine receptors (nAChR). Is a reversible antagonist of muscle nAChR (alpha-1-beta-1-delta-epsilon/CHRNA1-CHRNB1-CHRND-CHRNE) (IC(50)=10 nM) and a potent and poorly reversible antagonist of the neuronal alpha-7/CHRNA7 nAChR (IC(50)=50 nM). May exhibit differential affinities for the two binding sites on the muscle nAChR.</text>
</comment>
<comment type="subcellular location">
    <subcellularLocation>
        <location evidence="1">Secreted</location>
    </subcellularLocation>
</comment>
<comment type="tissue specificity">
    <text evidence="5">Expressed by the venom gland.</text>
</comment>
<comment type="mass spectrometry" mass="7334.69" error="0.26" method="MALDI" evidence="1"/>
<comment type="similarity">
    <text evidence="4">Belongs to the three-finger toxin family. Ancestral subfamily. Orphan group IV sub-subfamily.</text>
</comment>
<sequence length="87" mass="9635">MKTLLLTLVVVTIVCLDLGYTMKCKICNFDTCRAGELKVCASGEKYCFKESWREARGTRIERGCAATCPKGSVYGLYVLCCTTDDCN</sequence>
<accession>P81783</accession>
<organism>
    <name type="scientific">Bungarus candidus</name>
    <name type="common">Malayan krait</name>
    <dbReference type="NCBI Taxonomy" id="92438"/>
    <lineage>
        <taxon>Eukaryota</taxon>
        <taxon>Metazoa</taxon>
        <taxon>Chordata</taxon>
        <taxon>Craniata</taxon>
        <taxon>Vertebrata</taxon>
        <taxon>Euteleostomi</taxon>
        <taxon>Lepidosauria</taxon>
        <taxon>Squamata</taxon>
        <taxon>Bifurcata</taxon>
        <taxon>Unidentata</taxon>
        <taxon>Episquamata</taxon>
        <taxon>Toxicofera</taxon>
        <taxon>Serpentes</taxon>
        <taxon>Colubroidea</taxon>
        <taxon>Elapidae</taxon>
        <taxon>Bungarinae</taxon>
        <taxon>Bungarus</taxon>
    </lineage>
</organism>
<dbReference type="EMBL" id="AY142323">
    <property type="protein sequence ID" value="AAN16112.1"/>
    <property type="molecule type" value="mRNA"/>
</dbReference>
<dbReference type="PDB" id="1JGK">
    <property type="method" value="NMR"/>
    <property type="chains" value="A=22-87"/>
</dbReference>
<dbReference type="PDBsum" id="1JGK"/>
<dbReference type="BMRB" id="P81783"/>
<dbReference type="SMR" id="P81783"/>
<dbReference type="EvolutionaryTrace" id="P81783"/>
<dbReference type="GO" id="GO:0005576">
    <property type="term" value="C:extracellular region"/>
    <property type="evidence" value="ECO:0007669"/>
    <property type="project" value="UniProtKB-SubCell"/>
</dbReference>
<dbReference type="GO" id="GO:0030550">
    <property type="term" value="F:acetylcholine receptor inhibitor activity"/>
    <property type="evidence" value="ECO:0007669"/>
    <property type="project" value="UniProtKB-KW"/>
</dbReference>
<dbReference type="GO" id="GO:0099106">
    <property type="term" value="F:ion channel regulator activity"/>
    <property type="evidence" value="ECO:0007669"/>
    <property type="project" value="UniProtKB-KW"/>
</dbReference>
<dbReference type="GO" id="GO:0090729">
    <property type="term" value="F:toxin activity"/>
    <property type="evidence" value="ECO:0007669"/>
    <property type="project" value="UniProtKB-KW"/>
</dbReference>
<dbReference type="CDD" id="cd00206">
    <property type="entry name" value="TFP_snake_toxin"/>
    <property type="match status" value="1"/>
</dbReference>
<dbReference type="FunFam" id="2.10.60.10:FF:000024">
    <property type="entry name" value="Cytotoxin 1"/>
    <property type="match status" value="1"/>
</dbReference>
<dbReference type="Gene3D" id="2.10.60.10">
    <property type="entry name" value="CD59"/>
    <property type="match status" value="1"/>
</dbReference>
<dbReference type="InterPro" id="IPR003571">
    <property type="entry name" value="Snake_3FTx"/>
</dbReference>
<dbReference type="InterPro" id="IPR045860">
    <property type="entry name" value="Snake_toxin-like_sf"/>
</dbReference>
<dbReference type="InterPro" id="IPR018354">
    <property type="entry name" value="Snake_toxin_con_site"/>
</dbReference>
<dbReference type="InterPro" id="IPR054131">
    <property type="entry name" value="Toxin_cobra-type"/>
</dbReference>
<dbReference type="Pfam" id="PF21947">
    <property type="entry name" value="Toxin_cobra-type"/>
    <property type="match status" value="1"/>
</dbReference>
<dbReference type="SUPFAM" id="SSF57302">
    <property type="entry name" value="Snake toxin-like"/>
    <property type="match status" value="1"/>
</dbReference>
<dbReference type="PROSITE" id="PS00272">
    <property type="entry name" value="SNAKE_TOXIN"/>
    <property type="match status" value="1"/>
</dbReference>
<keyword id="KW-0002">3D-structure</keyword>
<keyword id="KW-0008">Acetylcholine receptor inhibiting toxin</keyword>
<keyword id="KW-0903">Direct protein sequencing</keyword>
<keyword id="KW-1015">Disulfide bond</keyword>
<keyword id="KW-0872">Ion channel impairing toxin</keyword>
<keyword id="KW-0528">Neurotoxin</keyword>
<keyword id="KW-0629">Postsynaptic neurotoxin</keyword>
<keyword id="KW-0964">Secreted</keyword>
<keyword id="KW-0732">Signal</keyword>
<keyword id="KW-0800">Toxin</keyword>
<name>3NO4_BUNCA</name>